<proteinExistence type="inferred from homology"/>
<accession>Q87WB2</accession>
<dbReference type="EMBL" id="AE016853">
    <property type="protein sequence ID" value="AAO58087.1"/>
    <property type="molecule type" value="Genomic_DNA"/>
</dbReference>
<dbReference type="RefSeq" id="NP_794392.1">
    <property type="nucleotide sequence ID" value="NC_004578.1"/>
</dbReference>
<dbReference type="RefSeq" id="WP_007243783.1">
    <property type="nucleotide sequence ID" value="NC_004578.1"/>
</dbReference>
<dbReference type="SMR" id="Q87WB2"/>
<dbReference type="STRING" id="223283.PSPTO_4641"/>
<dbReference type="GeneID" id="1186324"/>
<dbReference type="KEGG" id="pst:PSPTO_4641"/>
<dbReference type="PATRIC" id="fig|223283.9.peg.4756"/>
<dbReference type="eggNOG" id="COG1970">
    <property type="taxonomic scope" value="Bacteria"/>
</dbReference>
<dbReference type="HOGENOM" id="CLU_095787_0_0_6"/>
<dbReference type="OrthoDB" id="9810350at2"/>
<dbReference type="PhylomeDB" id="Q87WB2"/>
<dbReference type="Proteomes" id="UP000002515">
    <property type="component" value="Chromosome"/>
</dbReference>
<dbReference type="GO" id="GO:0005886">
    <property type="term" value="C:plasma membrane"/>
    <property type="evidence" value="ECO:0007669"/>
    <property type="project" value="UniProtKB-SubCell"/>
</dbReference>
<dbReference type="GO" id="GO:0008381">
    <property type="term" value="F:mechanosensitive monoatomic ion channel activity"/>
    <property type="evidence" value="ECO:0007669"/>
    <property type="project" value="UniProtKB-UniRule"/>
</dbReference>
<dbReference type="FunFam" id="1.10.1200.120:FF:000001">
    <property type="entry name" value="Large-conductance mechanosensitive channel"/>
    <property type="match status" value="1"/>
</dbReference>
<dbReference type="Gene3D" id="1.10.1200.120">
    <property type="entry name" value="Large-conductance mechanosensitive channel, MscL, domain 1"/>
    <property type="match status" value="1"/>
</dbReference>
<dbReference type="HAMAP" id="MF_00115">
    <property type="entry name" value="MscL"/>
    <property type="match status" value="1"/>
</dbReference>
<dbReference type="InterPro" id="IPR019823">
    <property type="entry name" value="Mechanosensitive_channel_CS"/>
</dbReference>
<dbReference type="InterPro" id="IPR001185">
    <property type="entry name" value="MS_channel"/>
</dbReference>
<dbReference type="InterPro" id="IPR037673">
    <property type="entry name" value="MSC/AndL"/>
</dbReference>
<dbReference type="InterPro" id="IPR036019">
    <property type="entry name" value="MscL_channel"/>
</dbReference>
<dbReference type="NCBIfam" id="TIGR00220">
    <property type="entry name" value="mscL"/>
    <property type="match status" value="1"/>
</dbReference>
<dbReference type="NCBIfam" id="NF001843">
    <property type="entry name" value="PRK00567.1-4"/>
    <property type="match status" value="1"/>
</dbReference>
<dbReference type="PANTHER" id="PTHR30266:SF2">
    <property type="entry name" value="LARGE-CONDUCTANCE MECHANOSENSITIVE CHANNEL"/>
    <property type="match status" value="1"/>
</dbReference>
<dbReference type="PANTHER" id="PTHR30266">
    <property type="entry name" value="MECHANOSENSITIVE CHANNEL MSCL"/>
    <property type="match status" value="1"/>
</dbReference>
<dbReference type="Pfam" id="PF01741">
    <property type="entry name" value="MscL"/>
    <property type="match status" value="1"/>
</dbReference>
<dbReference type="PRINTS" id="PR01264">
    <property type="entry name" value="MECHCHANNEL"/>
</dbReference>
<dbReference type="SUPFAM" id="SSF81330">
    <property type="entry name" value="Gated mechanosensitive channel"/>
    <property type="match status" value="1"/>
</dbReference>
<dbReference type="PROSITE" id="PS01327">
    <property type="entry name" value="MSCL"/>
    <property type="match status" value="1"/>
</dbReference>
<evidence type="ECO:0000255" key="1">
    <source>
        <dbReference type="HAMAP-Rule" id="MF_00115"/>
    </source>
</evidence>
<organism>
    <name type="scientific">Pseudomonas syringae pv. tomato (strain ATCC BAA-871 / DC3000)</name>
    <dbReference type="NCBI Taxonomy" id="223283"/>
    <lineage>
        <taxon>Bacteria</taxon>
        <taxon>Pseudomonadati</taxon>
        <taxon>Pseudomonadota</taxon>
        <taxon>Gammaproteobacteria</taxon>
        <taxon>Pseudomonadales</taxon>
        <taxon>Pseudomonadaceae</taxon>
        <taxon>Pseudomonas</taxon>
    </lineage>
</organism>
<reference key="1">
    <citation type="journal article" date="2003" name="Proc. Natl. Acad. Sci. U.S.A.">
        <title>The complete genome sequence of the Arabidopsis and tomato pathogen Pseudomonas syringae pv. tomato DC3000.</title>
        <authorList>
            <person name="Buell C.R."/>
            <person name="Joardar V."/>
            <person name="Lindeberg M."/>
            <person name="Selengut J."/>
            <person name="Paulsen I.T."/>
            <person name="Gwinn M.L."/>
            <person name="Dodson R.J."/>
            <person name="DeBoy R.T."/>
            <person name="Durkin A.S."/>
            <person name="Kolonay J.F."/>
            <person name="Madupu R."/>
            <person name="Daugherty S.C."/>
            <person name="Brinkac L.M."/>
            <person name="Beanan M.J."/>
            <person name="Haft D.H."/>
            <person name="Nelson W.C."/>
            <person name="Davidsen T.M."/>
            <person name="Zafar N."/>
            <person name="Zhou L."/>
            <person name="Liu J."/>
            <person name="Yuan Q."/>
            <person name="Khouri H.M."/>
            <person name="Fedorova N.B."/>
            <person name="Tran B."/>
            <person name="Russell D."/>
            <person name="Berry K.J."/>
            <person name="Utterback T.R."/>
            <person name="Van Aken S.E."/>
            <person name="Feldblyum T.V."/>
            <person name="D'Ascenzo M."/>
            <person name="Deng W.-L."/>
            <person name="Ramos A.R."/>
            <person name="Alfano J.R."/>
            <person name="Cartinhour S."/>
            <person name="Chatterjee A.K."/>
            <person name="Delaney T.P."/>
            <person name="Lazarowitz S.G."/>
            <person name="Martin G.B."/>
            <person name="Schneider D.J."/>
            <person name="Tang X."/>
            <person name="Bender C.L."/>
            <person name="White O."/>
            <person name="Fraser C.M."/>
            <person name="Collmer A."/>
        </authorList>
    </citation>
    <scope>NUCLEOTIDE SEQUENCE [LARGE SCALE GENOMIC DNA]</scope>
    <source>
        <strain>ATCC BAA-871 / DC3000</strain>
    </source>
</reference>
<feature type="chain" id="PRO_0000192457" description="Large-conductance mechanosensitive channel">
    <location>
        <begin position="1"/>
        <end position="148"/>
    </location>
</feature>
<feature type="transmembrane region" description="Helical" evidence="1">
    <location>
        <begin position="9"/>
        <end position="29"/>
    </location>
</feature>
<feature type="transmembrane region" description="Helical" evidence="1">
    <location>
        <begin position="79"/>
        <end position="99"/>
    </location>
</feature>
<sequence>MSVLTEFKAFAVKGNVVDMAVGIIIGAAFGKIVSSFVGDVIMPPLGLLIGGVDFSDLAVTLRPAQGTAPAVLLAYGKFIQTVIDFIIVAFAIFMGVKAINRLKREEAKAPTLPPTPSKQEVLLSEIRDLLKAQNTPAAPITVDPARTL</sequence>
<comment type="function">
    <text evidence="1">Channel that opens in response to stretch forces in the membrane lipid bilayer. May participate in the regulation of osmotic pressure changes within the cell.</text>
</comment>
<comment type="subunit">
    <text evidence="1">Homopentamer.</text>
</comment>
<comment type="subcellular location">
    <subcellularLocation>
        <location evidence="1">Cell inner membrane</location>
        <topology evidence="1">Multi-pass membrane protein</topology>
    </subcellularLocation>
</comment>
<comment type="similarity">
    <text evidence="1">Belongs to the MscL family.</text>
</comment>
<keyword id="KW-0997">Cell inner membrane</keyword>
<keyword id="KW-1003">Cell membrane</keyword>
<keyword id="KW-0407">Ion channel</keyword>
<keyword id="KW-0406">Ion transport</keyword>
<keyword id="KW-0472">Membrane</keyword>
<keyword id="KW-1185">Reference proteome</keyword>
<keyword id="KW-0812">Transmembrane</keyword>
<keyword id="KW-1133">Transmembrane helix</keyword>
<keyword id="KW-0813">Transport</keyword>
<gene>
    <name evidence="1" type="primary">mscL</name>
    <name type="ordered locus">PSPTO_4641</name>
</gene>
<protein>
    <recommendedName>
        <fullName evidence="1">Large-conductance mechanosensitive channel</fullName>
    </recommendedName>
</protein>
<name>MSCL_PSESM</name>